<name>CZCB_ALCSC</name>
<accession>P94176</accession>
<organism>
    <name type="scientific">Alcaligenes sp. (strain CT14)</name>
    <dbReference type="NCBI Taxonomy" id="68998"/>
    <lineage>
        <taxon>Bacteria</taxon>
        <taxon>Pseudomonadati</taxon>
        <taxon>Pseudomonadota</taxon>
        <taxon>Betaproteobacteria</taxon>
        <taxon>Burkholderiales</taxon>
        <taxon>Alcaligenaceae</taxon>
        <taxon>Alcaligenes</taxon>
    </lineage>
</organism>
<protein>
    <recommendedName>
        <fullName>Cation efflux system protein CzcB</fullName>
    </recommendedName>
</protein>
<sequence>MAISNKQKAAIAAIVLVGGVATGGVLLSGRSAPEEQGGHSESKGHGDTEHHGKQAAEADHKDDKSHGDGEHHEVKKGPNGGALFSRDGYDVEIGTAESKGEARIRLWVSKSGKAVANGVAATGQLVRATGESQALKFVVSGDALESQQPVAEPHVFDVTANVTLPGSSSPLAVRLSKEEGKIELTADQLAKTGVVVQTAGSAKVQAGVQFPGEIRFNEDKTAHVVPRLAGVVESVPANIGQQVKKGQVLAVIASTGLSDQRSELLAAQKRLDLARVTYDREKKLWEQKISADEDYLSARNALQEAQISVQNAQQKLTAIGASNSSTALNRYELRAPFAGMIVEKHISLGEAVADNANVFTLSDLSSVWAEFVVSAKDVERVRIGEKASINSASSDVKADGTVSYVGSLLGEQTRTAKARVTLTNPQMAWRPGLFVTVDVFGADVEVPVAVKTEAVQDVNGESVVFVAVQGGFVPQPVKVGRTNGKVIEIVEGLKPGARYAAANSFVLKAELGKSSAEHGH</sequence>
<feature type="chain" id="PRO_0000201868" description="Cation efflux system protein CzcB">
    <location>
        <begin position="1"/>
        <end position="520"/>
    </location>
</feature>
<feature type="region of interest" description="Disordered" evidence="1">
    <location>
        <begin position="28"/>
        <end position="85"/>
    </location>
</feature>
<feature type="compositionally biased region" description="Basic and acidic residues" evidence="1">
    <location>
        <begin position="32"/>
        <end position="76"/>
    </location>
</feature>
<dbReference type="EMBL" id="D67044">
    <property type="protein sequence ID" value="BAA11060.1"/>
    <property type="molecule type" value="Genomic_DNA"/>
</dbReference>
<dbReference type="PIR" id="JC4699">
    <property type="entry name" value="JC4699"/>
</dbReference>
<dbReference type="SMR" id="P94176"/>
<dbReference type="GO" id="GO:0016020">
    <property type="term" value="C:membrane"/>
    <property type="evidence" value="ECO:0007669"/>
    <property type="project" value="InterPro"/>
</dbReference>
<dbReference type="GO" id="GO:0030288">
    <property type="term" value="C:outer membrane-bounded periplasmic space"/>
    <property type="evidence" value="ECO:0007669"/>
    <property type="project" value="TreeGrafter"/>
</dbReference>
<dbReference type="GO" id="GO:0046873">
    <property type="term" value="F:metal ion transmembrane transporter activity"/>
    <property type="evidence" value="ECO:0007669"/>
    <property type="project" value="InterPro"/>
</dbReference>
<dbReference type="GO" id="GO:0046914">
    <property type="term" value="F:transition metal ion binding"/>
    <property type="evidence" value="ECO:0007669"/>
    <property type="project" value="TreeGrafter"/>
</dbReference>
<dbReference type="GO" id="GO:0060003">
    <property type="term" value="P:copper ion export"/>
    <property type="evidence" value="ECO:0007669"/>
    <property type="project" value="TreeGrafter"/>
</dbReference>
<dbReference type="GO" id="GO:0015679">
    <property type="term" value="P:plasma membrane copper ion transport"/>
    <property type="evidence" value="ECO:0007669"/>
    <property type="project" value="TreeGrafter"/>
</dbReference>
<dbReference type="GO" id="GO:0046686">
    <property type="term" value="P:response to cadmium ion"/>
    <property type="evidence" value="ECO:0007669"/>
    <property type="project" value="UniProtKB-KW"/>
</dbReference>
<dbReference type="FunFam" id="2.40.30.170:FF:000010">
    <property type="entry name" value="Efflux RND transporter periplasmic adaptor subunit"/>
    <property type="match status" value="1"/>
</dbReference>
<dbReference type="FunFam" id="2.40.420.20:FF:000006">
    <property type="entry name" value="RND family efflux transporter MFP subunit"/>
    <property type="match status" value="1"/>
</dbReference>
<dbReference type="Gene3D" id="2.40.30.170">
    <property type="match status" value="1"/>
</dbReference>
<dbReference type="Gene3D" id="2.40.420.20">
    <property type="match status" value="1"/>
</dbReference>
<dbReference type="Gene3D" id="2.40.50.100">
    <property type="match status" value="1"/>
</dbReference>
<dbReference type="Gene3D" id="1.10.287.470">
    <property type="entry name" value="Helix hairpin bin"/>
    <property type="match status" value="1"/>
</dbReference>
<dbReference type="InterPro" id="IPR005695">
    <property type="entry name" value="Co/Zn/Cd_resistance_CzcB-like"/>
</dbReference>
<dbReference type="InterPro" id="IPR043602">
    <property type="entry name" value="CusB-like_dom_1"/>
</dbReference>
<dbReference type="InterPro" id="IPR032317">
    <property type="entry name" value="CusB_D23"/>
</dbReference>
<dbReference type="InterPro" id="IPR051909">
    <property type="entry name" value="MFP_Cation_Efflux"/>
</dbReference>
<dbReference type="InterPro" id="IPR006143">
    <property type="entry name" value="RND_pump_MFP"/>
</dbReference>
<dbReference type="NCBIfam" id="TIGR00999">
    <property type="entry name" value="8a0102"/>
    <property type="match status" value="1"/>
</dbReference>
<dbReference type="NCBIfam" id="TIGR01730">
    <property type="entry name" value="RND_mfp"/>
    <property type="match status" value="1"/>
</dbReference>
<dbReference type="PANTHER" id="PTHR30097">
    <property type="entry name" value="CATION EFFLUX SYSTEM PROTEIN CUSB"/>
    <property type="match status" value="1"/>
</dbReference>
<dbReference type="PANTHER" id="PTHR30097:SF4">
    <property type="entry name" value="SLR6042 PROTEIN"/>
    <property type="match status" value="1"/>
</dbReference>
<dbReference type="Pfam" id="PF00529">
    <property type="entry name" value="CusB_dom_1"/>
    <property type="match status" value="1"/>
</dbReference>
<dbReference type="Pfam" id="PF16576">
    <property type="entry name" value="HlyD_D23"/>
    <property type="match status" value="1"/>
</dbReference>
<dbReference type="SUPFAM" id="SSF111369">
    <property type="entry name" value="HlyD-like secretion proteins"/>
    <property type="match status" value="1"/>
</dbReference>
<proteinExistence type="inferred from homology"/>
<reference key="1">
    <citation type="journal article" date="1996" name="Biosci. Biotechnol. Biochem.">
        <title>Cloning and sequence analysis of czc genes in Alcaligenes sp. strain CT14.</title>
        <authorList>
            <person name="Kunito T."/>
            <person name="Kusano T."/>
            <person name="Oyaizu H."/>
            <person name="Senoo K."/>
            <person name="Kanazawa S."/>
            <person name="Matsumoto S."/>
        </authorList>
    </citation>
    <scope>NUCLEOTIDE SEQUENCE [GENOMIC DNA]</scope>
</reference>
<gene>
    <name type="primary">czcB</name>
</gene>
<evidence type="ECO:0000256" key="1">
    <source>
        <dbReference type="SAM" id="MobiDB-lite"/>
    </source>
</evidence>
<evidence type="ECO:0000305" key="2"/>
<keyword id="KW-0105">Cadmium resistance</keyword>
<keyword id="KW-0170">Cobalt</keyword>
<keyword id="KW-0614">Plasmid</keyword>
<keyword id="KW-0813">Transport</keyword>
<keyword id="KW-0862">Zinc</keyword>
<comment type="function">
    <text>CzcA and CzcB together would act in zinc efflux nearly as effectively as the complete czc efflux system (CzcABC). The CzcB protein is thought to funnel zinc cations to the CzcA transport protein.</text>
</comment>
<comment type="similarity">
    <text evidence="2">Belongs to the membrane fusion protein (MFP) (TC 8.A.1) family.</text>
</comment>